<organism>
    <name type="scientific">Pyricularia oryzae (strain 70-15 / ATCC MYA-4617 / FGSC 8958)</name>
    <name type="common">Rice blast fungus</name>
    <name type="synonym">Magnaporthe oryzae</name>
    <dbReference type="NCBI Taxonomy" id="242507"/>
    <lineage>
        <taxon>Eukaryota</taxon>
        <taxon>Fungi</taxon>
        <taxon>Dikarya</taxon>
        <taxon>Ascomycota</taxon>
        <taxon>Pezizomycotina</taxon>
        <taxon>Sordariomycetes</taxon>
        <taxon>Sordariomycetidae</taxon>
        <taxon>Magnaporthales</taxon>
        <taxon>Pyriculariaceae</taxon>
        <taxon>Pyricularia</taxon>
    </lineage>
</organism>
<accession>G4N708</accession>
<accession>Q3MSM7</accession>
<dbReference type="EC" id="1.1.1.307"/>
<dbReference type="EMBL" id="AJ890447">
    <property type="protein sequence ID" value="CAI67591.1"/>
    <property type="molecule type" value="mRNA"/>
</dbReference>
<dbReference type="EMBL" id="CM001234">
    <property type="protein sequence ID" value="EHA49921.1"/>
    <property type="molecule type" value="Genomic_DNA"/>
</dbReference>
<dbReference type="RefSeq" id="XP_003716240.1">
    <property type="nucleotide sequence ID" value="XM_003716192.1"/>
</dbReference>
<dbReference type="SMR" id="G4N708"/>
<dbReference type="FunCoup" id="G4N708">
    <property type="interactions" value="411"/>
</dbReference>
<dbReference type="STRING" id="242507.G4N708"/>
<dbReference type="EnsemblFungi" id="MGG_03648T0">
    <property type="protein sequence ID" value="MGG_03648T0"/>
    <property type="gene ID" value="MGG_03648"/>
</dbReference>
<dbReference type="GeneID" id="2676633"/>
<dbReference type="KEGG" id="mgr:MGG_03648"/>
<dbReference type="VEuPathDB" id="FungiDB:MGG_03648"/>
<dbReference type="eggNOG" id="KOG1577">
    <property type="taxonomic scope" value="Eukaryota"/>
</dbReference>
<dbReference type="HOGENOM" id="CLU_023205_0_0_1"/>
<dbReference type="InParanoid" id="G4N708"/>
<dbReference type="OMA" id="DMYLVHT"/>
<dbReference type="OrthoDB" id="416253at2759"/>
<dbReference type="UniPathway" id="UPA00810"/>
<dbReference type="Proteomes" id="UP000009058">
    <property type="component" value="Chromosome 4"/>
</dbReference>
<dbReference type="GO" id="GO:0032866">
    <property type="term" value="F:D-xylose reductase (NADPH) activity"/>
    <property type="evidence" value="ECO:0007669"/>
    <property type="project" value="InterPro"/>
</dbReference>
<dbReference type="GO" id="GO:0042843">
    <property type="term" value="P:D-xylose catabolic process"/>
    <property type="evidence" value="ECO:0007669"/>
    <property type="project" value="UniProtKB-UniPathway"/>
</dbReference>
<dbReference type="CDD" id="cd19115">
    <property type="entry name" value="AKR_AKR2D1"/>
    <property type="match status" value="1"/>
</dbReference>
<dbReference type="FunFam" id="3.20.20.100:FF:000007">
    <property type="entry name" value="NAD(P)H-dependent D-xylose reductase xyl1"/>
    <property type="match status" value="1"/>
</dbReference>
<dbReference type="Gene3D" id="3.20.20.100">
    <property type="entry name" value="NADP-dependent oxidoreductase domain"/>
    <property type="match status" value="1"/>
</dbReference>
<dbReference type="InterPro" id="IPR020471">
    <property type="entry name" value="AKR"/>
</dbReference>
<dbReference type="InterPro" id="IPR044487">
    <property type="entry name" value="AKR2D"/>
</dbReference>
<dbReference type="InterPro" id="IPR018170">
    <property type="entry name" value="Aldo/ket_reductase_CS"/>
</dbReference>
<dbReference type="InterPro" id="IPR023210">
    <property type="entry name" value="NADP_OxRdtase_dom"/>
</dbReference>
<dbReference type="InterPro" id="IPR036812">
    <property type="entry name" value="NADP_OxRdtase_dom_sf"/>
</dbReference>
<dbReference type="PANTHER" id="PTHR11732">
    <property type="entry name" value="ALDO/KETO REDUCTASE"/>
    <property type="match status" value="1"/>
</dbReference>
<dbReference type="Pfam" id="PF00248">
    <property type="entry name" value="Aldo_ket_red"/>
    <property type="match status" value="1"/>
</dbReference>
<dbReference type="PIRSF" id="PIRSF000097">
    <property type="entry name" value="AKR"/>
    <property type="match status" value="1"/>
</dbReference>
<dbReference type="PRINTS" id="PR00069">
    <property type="entry name" value="ALDKETRDTASE"/>
</dbReference>
<dbReference type="SUPFAM" id="SSF51430">
    <property type="entry name" value="NAD(P)-linked oxidoreductase"/>
    <property type="match status" value="1"/>
</dbReference>
<dbReference type="PROSITE" id="PS00798">
    <property type="entry name" value="ALDOKETO_REDUCTASE_1"/>
    <property type="match status" value="1"/>
</dbReference>
<dbReference type="PROSITE" id="PS00062">
    <property type="entry name" value="ALDOKETO_REDUCTASE_2"/>
    <property type="match status" value="1"/>
</dbReference>
<keyword id="KW-0119">Carbohydrate metabolism</keyword>
<keyword id="KW-0520">NAD</keyword>
<keyword id="KW-0521">NADP</keyword>
<keyword id="KW-0560">Oxidoreductase</keyword>
<keyword id="KW-1185">Reference proteome</keyword>
<keyword id="KW-0859">Xylose metabolism</keyword>
<evidence type="ECO:0000250" key="1"/>
<evidence type="ECO:0000269" key="2">
    <source>
    </source>
</evidence>
<evidence type="ECO:0000305" key="3"/>
<sequence length="324" mass="36631">MASPTMKLNNGLDMPQVGFGLWKVENSVCADVVYNAIKAGYRLFDGACDYGNEVECGQGVKRAIDEGLVKREELFIVSKLWNTFHDGERVEPIVKKQLADWGIEYFDLYLIHFPVALEYVDPSVRYPPGWHYDDAGTEIRPSKASIQETWTAMEKLVDAGLSKAIGVSNFQAQLLYDMLRYARIRPATLQIEHHPYLVQQRLIEACKTEGIVVTAYSSFGPASFKEFNMEHAEALTPLLEEPTIVKLAEKYGKDPGQVLLRWATQRGLAVIPKSSREKTMKSNFEAVGWDMEDSDIKTISALDKGIRFNQPANYFSTDKLWIFG</sequence>
<comment type="function">
    <text evidence="1">Catalyzes the initial reaction in the xylose utilization pathway by reducing D-xylose into xylitol. Xylose is a major component of hemicelluloses such as xylan. Most fungi utilize D-xylose via three enzymatic reactions, xylose reductase (XR), xylitol dehydrogenase (XDH), and xylulokinase, to form xylulose 5-phosphate, which enters pentose phosphate pathway (By similarity).</text>
</comment>
<comment type="catalytic activity">
    <reaction>
        <text>xylitol + NAD(+) = D-xylose + NADH + H(+)</text>
        <dbReference type="Rhea" id="RHEA:27441"/>
        <dbReference type="ChEBI" id="CHEBI:15378"/>
        <dbReference type="ChEBI" id="CHEBI:17151"/>
        <dbReference type="ChEBI" id="CHEBI:53455"/>
        <dbReference type="ChEBI" id="CHEBI:57540"/>
        <dbReference type="ChEBI" id="CHEBI:57945"/>
        <dbReference type="EC" id="1.1.1.307"/>
    </reaction>
</comment>
<comment type="catalytic activity">
    <reaction>
        <text>xylitol + NADP(+) = D-xylose + NADPH + H(+)</text>
        <dbReference type="Rhea" id="RHEA:27445"/>
        <dbReference type="ChEBI" id="CHEBI:15378"/>
        <dbReference type="ChEBI" id="CHEBI:17151"/>
        <dbReference type="ChEBI" id="CHEBI:53455"/>
        <dbReference type="ChEBI" id="CHEBI:57783"/>
        <dbReference type="ChEBI" id="CHEBI:58349"/>
        <dbReference type="EC" id="1.1.1.307"/>
    </reaction>
</comment>
<comment type="pathway">
    <text>Carbohydrate metabolism; D-xylose degradation.</text>
</comment>
<comment type="induction">
    <text evidence="2">Overexpressed during growth on both D-xylose or L-arabinose compared to D-glucose. Significantly expressed during late stages of infection of barley leaves.</text>
</comment>
<comment type="similarity">
    <text evidence="3">Belongs to the aldo/keto reductase family.</text>
</comment>
<feature type="chain" id="PRO_0000425415" description="NAD(P)H-dependent D-xylose reductase XYR1">
    <location>
        <begin position="1"/>
        <end position="324"/>
    </location>
</feature>
<feature type="active site" description="Proton donor" evidence="1">
    <location>
        <position position="50"/>
    </location>
</feature>
<feature type="binding site" evidence="1">
    <location>
        <position position="112"/>
    </location>
    <ligand>
        <name>substrate</name>
    </ligand>
</feature>
<feature type="binding site" evidence="1">
    <location>
        <begin position="168"/>
        <end position="169"/>
    </location>
    <ligand>
        <name>NAD(+)</name>
        <dbReference type="ChEBI" id="CHEBI:57540"/>
    </ligand>
</feature>
<feature type="binding site" evidence="1">
    <location>
        <begin position="217"/>
        <end position="226"/>
    </location>
    <ligand>
        <name>NAD(+)</name>
        <dbReference type="ChEBI" id="CHEBI:57540"/>
    </ligand>
</feature>
<feature type="binding site" evidence="1">
    <location>
        <begin position="273"/>
        <end position="283"/>
    </location>
    <ligand>
        <name>NAD(+)</name>
        <dbReference type="ChEBI" id="CHEBI:57540"/>
    </ligand>
</feature>
<feature type="site" description="Lowers pKa of active site Tyr" evidence="1">
    <location>
        <position position="79"/>
    </location>
</feature>
<protein>
    <recommendedName>
        <fullName>NAD(P)H-dependent D-xylose reductase XYR1</fullName>
        <shortName>XR</shortName>
        <ecNumber>1.1.1.307</ecNumber>
    </recommendedName>
</protein>
<reference key="1">
    <citation type="journal article" date="2013" name="FEBS Lett.">
        <title>The pentose catabolic pathway of the rice-blast fungus Magnaporthe oryzae involves a novel pentose reductase restricted to few fungal species.</title>
        <authorList>
            <person name="Klaubauf S."/>
            <person name="Ribot C."/>
            <person name="Melayah D."/>
            <person name="Lagorce A."/>
            <person name="Lebrun M.H."/>
            <person name="de Vries R.P."/>
        </authorList>
    </citation>
    <scope>NUCLEOTIDE SEQUENCE [MRNA]</scope>
    <scope>INDUCTION</scope>
    <source>
        <strain>P1.2</strain>
    </source>
</reference>
<reference key="2">
    <citation type="journal article" date="2005" name="Nature">
        <title>The genome sequence of the rice blast fungus Magnaporthe grisea.</title>
        <authorList>
            <person name="Dean R.A."/>
            <person name="Talbot N.J."/>
            <person name="Ebbole D.J."/>
            <person name="Farman M.L."/>
            <person name="Mitchell T.K."/>
            <person name="Orbach M.J."/>
            <person name="Thon M.R."/>
            <person name="Kulkarni R."/>
            <person name="Xu J.-R."/>
            <person name="Pan H."/>
            <person name="Read N.D."/>
            <person name="Lee Y.-H."/>
            <person name="Carbone I."/>
            <person name="Brown D."/>
            <person name="Oh Y.Y."/>
            <person name="Donofrio N."/>
            <person name="Jeong J.S."/>
            <person name="Soanes D.M."/>
            <person name="Djonovic S."/>
            <person name="Kolomiets E."/>
            <person name="Rehmeyer C."/>
            <person name="Li W."/>
            <person name="Harding M."/>
            <person name="Kim S."/>
            <person name="Lebrun M.-H."/>
            <person name="Bohnert H."/>
            <person name="Coughlan S."/>
            <person name="Butler J."/>
            <person name="Calvo S.E."/>
            <person name="Ma L.-J."/>
            <person name="Nicol R."/>
            <person name="Purcell S."/>
            <person name="Nusbaum C."/>
            <person name="Galagan J.E."/>
            <person name="Birren B.W."/>
        </authorList>
    </citation>
    <scope>NUCLEOTIDE SEQUENCE [LARGE SCALE GENOMIC DNA]</scope>
    <source>
        <strain>70-15 / ATCC MYA-4617 / FGSC 8958</strain>
    </source>
</reference>
<gene>
    <name type="primary">XYR1</name>
    <name type="ORF">MGG_03648</name>
</gene>
<name>XYL1_PYRO7</name>
<proteinExistence type="evidence at transcript level"/>